<protein>
    <recommendedName>
        <fullName>Transmembrane emp24 domain-containing protein 6</fullName>
    </recommendedName>
    <alternativeName>
        <fullName>p24 family protein gamma-5</fullName>
        <shortName>p24gamma5</shortName>
    </alternativeName>
</protein>
<reference key="1">
    <citation type="journal article" date="2003" name="Genome Res.">
        <title>The secreted protein discovery initiative (SPDI), a large-scale effort to identify novel human secreted and transmembrane proteins: a bioinformatics assessment.</title>
        <authorList>
            <person name="Clark H.F."/>
            <person name="Gurney A.L."/>
            <person name="Abaya E."/>
            <person name="Baker K."/>
            <person name="Baldwin D.T."/>
            <person name="Brush J."/>
            <person name="Chen J."/>
            <person name="Chow B."/>
            <person name="Chui C."/>
            <person name="Crowley C."/>
            <person name="Currell B."/>
            <person name="Deuel B."/>
            <person name="Dowd P."/>
            <person name="Eaton D."/>
            <person name="Foster J.S."/>
            <person name="Grimaldi C."/>
            <person name="Gu Q."/>
            <person name="Hass P.E."/>
            <person name="Heldens S."/>
            <person name="Huang A."/>
            <person name="Kim H.S."/>
            <person name="Klimowski L."/>
            <person name="Jin Y."/>
            <person name="Johnson S."/>
            <person name="Lee J."/>
            <person name="Lewis L."/>
            <person name="Liao D."/>
            <person name="Mark M.R."/>
            <person name="Robbie E."/>
            <person name="Sanchez C."/>
            <person name="Schoenfeld J."/>
            <person name="Seshagiri S."/>
            <person name="Simmons L."/>
            <person name="Singh J."/>
            <person name="Smith V."/>
            <person name="Stinson J."/>
            <person name="Vagts A."/>
            <person name="Vandlen R.L."/>
            <person name="Watanabe C."/>
            <person name="Wieand D."/>
            <person name="Woods K."/>
            <person name="Xie M.-H."/>
            <person name="Yansura D.G."/>
            <person name="Yi S."/>
            <person name="Yu G."/>
            <person name="Yuan J."/>
            <person name="Zhang M."/>
            <person name="Zhang Z."/>
            <person name="Goddard A.D."/>
            <person name="Wood W.I."/>
            <person name="Godowski P.J."/>
            <person name="Gray A.M."/>
        </authorList>
    </citation>
    <scope>NUCLEOTIDE SEQUENCE [LARGE SCALE MRNA]</scope>
</reference>
<reference key="2">
    <citation type="submission" date="2005-07" db="EMBL/GenBank/DDBJ databases">
        <authorList>
            <person name="Mural R.J."/>
            <person name="Istrail S."/>
            <person name="Sutton G.G."/>
            <person name="Florea L."/>
            <person name="Halpern A.L."/>
            <person name="Mobarry C.M."/>
            <person name="Lippert R."/>
            <person name="Walenz B."/>
            <person name="Shatkay H."/>
            <person name="Dew I."/>
            <person name="Miller J.R."/>
            <person name="Flanigan M.J."/>
            <person name="Edwards N.J."/>
            <person name="Bolanos R."/>
            <person name="Fasulo D."/>
            <person name="Halldorsson B.V."/>
            <person name="Hannenhalli S."/>
            <person name="Turner R."/>
            <person name="Yooseph S."/>
            <person name="Lu F."/>
            <person name="Nusskern D.R."/>
            <person name="Shue B.C."/>
            <person name="Zheng X.H."/>
            <person name="Zhong F."/>
            <person name="Delcher A.L."/>
            <person name="Huson D.H."/>
            <person name="Kravitz S.A."/>
            <person name="Mouchard L."/>
            <person name="Reinert K."/>
            <person name="Remington K.A."/>
            <person name="Clark A.G."/>
            <person name="Waterman M.S."/>
            <person name="Eichler E.E."/>
            <person name="Adams M.D."/>
            <person name="Hunkapiller M.W."/>
            <person name="Myers E.W."/>
            <person name="Venter J.C."/>
        </authorList>
    </citation>
    <scope>NUCLEOTIDE SEQUENCE [LARGE SCALE GENOMIC DNA]</scope>
</reference>
<reference key="3">
    <citation type="journal article" date="2004" name="Genome Res.">
        <title>The status, quality, and expansion of the NIH full-length cDNA project: the Mammalian Gene Collection (MGC).</title>
        <authorList>
            <consortium name="The MGC Project Team"/>
        </authorList>
    </citation>
    <scope>NUCLEOTIDE SEQUENCE [LARGE SCALE MRNA]</scope>
    <source>
        <tissue>Liver</tissue>
    </source>
</reference>
<comment type="subcellular location">
    <subcellularLocation>
        <location evidence="1">Endoplasmic reticulum membrane</location>
        <topology evidence="1">Single-pass type I membrane protein</topology>
    </subcellularLocation>
</comment>
<comment type="similarity">
    <text evidence="4">Belongs to the EMP24/GP25L family.</text>
</comment>
<organism>
    <name type="scientific">Homo sapiens</name>
    <name type="common">Human</name>
    <dbReference type="NCBI Taxonomy" id="9606"/>
    <lineage>
        <taxon>Eukaryota</taxon>
        <taxon>Metazoa</taxon>
        <taxon>Chordata</taxon>
        <taxon>Craniata</taxon>
        <taxon>Vertebrata</taxon>
        <taxon>Euteleostomi</taxon>
        <taxon>Mammalia</taxon>
        <taxon>Eutheria</taxon>
        <taxon>Euarchontoglires</taxon>
        <taxon>Primates</taxon>
        <taxon>Haplorrhini</taxon>
        <taxon>Catarrhini</taxon>
        <taxon>Hominidae</taxon>
        <taxon>Homo</taxon>
    </lineage>
</organism>
<feature type="signal peptide" evidence="2">
    <location>
        <begin position="1"/>
        <end position="21"/>
    </location>
</feature>
<feature type="chain" id="PRO_0000010393" description="Transmembrane emp24 domain-containing protein 6">
    <location>
        <begin position="22"/>
        <end position="240"/>
    </location>
</feature>
<feature type="topological domain" description="Lumenal" evidence="2">
    <location>
        <begin position="22"/>
        <end position="200"/>
    </location>
</feature>
<feature type="transmembrane region" description="Helical" evidence="2">
    <location>
        <begin position="201"/>
        <end position="223"/>
    </location>
</feature>
<feature type="topological domain" description="Cytoplasmic" evidence="2">
    <location>
        <begin position="224"/>
        <end position="240"/>
    </location>
</feature>
<feature type="domain" description="GOLD" evidence="3">
    <location>
        <begin position="53"/>
        <end position="138"/>
    </location>
</feature>
<feature type="glycosylation site" description="N-linked (GlcNAc...) asparagine" evidence="2">
    <location>
        <position position="107"/>
    </location>
</feature>
<feature type="glycosylation site" description="N-linked (GlcNAc...) asparagine" evidence="2">
    <location>
        <position position="156"/>
    </location>
</feature>
<feature type="sequence conflict" description="In Ref. 3; AAH20827." evidence="4" ref="3">
    <original>Y</original>
    <variation>C</variation>
    <location>
        <position position="70"/>
    </location>
</feature>
<evidence type="ECO:0000250" key="1"/>
<evidence type="ECO:0000255" key="2"/>
<evidence type="ECO:0000255" key="3">
    <source>
        <dbReference type="PROSITE-ProRule" id="PRU00096"/>
    </source>
</evidence>
<evidence type="ECO:0000305" key="4"/>
<sequence length="240" mass="27631">MSPLLFGAGLVVLNLVTSARSQKTEPLSGSGDQPLFRGADRYDFAIMIPPGGTECFWQFAHQTGYFYFSYEVQRTVGMSHDRHVAATAHNPQGFLIDTSQGVRGQINFSTQETGFYQLCLSNQHNHFGSVQVYLNFGVFYEGPETDHKQKERKQLNDTLDAIEDGTQKVQNNIFHMWRYYNFARMRKMADFFLIQSNYNYVNWWSTAQSLVIILSGILQLYFLKRLFNVPTTTDTKKPRC</sequence>
<proteinExistence type="evidence at protein level"/>
<dbReference type="EMBL" id="AY358268">
    <property type="protein sequence ID" value="AAQ88635.1"/>
    <property type="molecule type" value="mRNA"/>
</dbReference>
<dbReference type="EMBL" id="CH471092">
    <property type="protein sequence ID" value="EAW83272.1"/>
    <property type="molecule type" value="Genomic_DNA"/>
</dbReference>
<dbReference type="EMBL" id="BC020827">
    <property type="protein sequence ID" value="AAH20827.1"/>
    <property type="molecule type" value="mRNA"/>
</dbReference>
<dbReference type="CCDS" id="CCDS10878.1"/>
<dbReference type="RefSeq" id="NP_653277.2">
    <property type="nucleotide sequence ID" value="NM_144676.4"/>
</dbReference>
<dbReference type="SMR" id="Q8WW62"/>
<dbReference type="BioGRID" id="126989">
    <property type="interactions" value="44"/>
</dbReference>
<dbReference type="FunCoup" id="Q8WW62">
    <property type="interactions" value="115"/>
</dbReference>
<dbReference type="IntAct" id="Q8WW62">
    <property type="interactions" value="37"/>
</dbReference>
<dbReference type="STRING" id="9606.ENSP00000288025"/>
<dbReference type="GlyCosmos" id="Q8WW62">
    <property type="glycosylation" value="2 sites, No reported glycans"/>
</dbReference>
<dbReference type="GlyGen" id="Q8WW62">
    <property type="glycosylation" value="2 sites"/>
</dbReference>
<dbReference type="iPTMnet" id="Q8WW62"/>
<dbReference type="PhosphoSitePlus" id="Q8WW62"/>
<dbReference type="BioMuta" id="TMED6"/>
<dbReference type="DMDM" id="166897636"/>
<dbReference type="MassIVE" id="Q8WW62"/>
<dbReference type="PaxDb" id="9606-ENSP00000288025"/>
<dbReference type="PeptideAtlas" id="Q8WW62"/>
<dbReference type="ProteomicsDB" id="74867"/>
<dbReference type="Antibodypedia" id="2528">
    <property type="antibodies" value="83 antibodies from 16 providers"/>
</dbReference>
<dbReference type="DNASU" id="146456"/>
<dbReference type="Ensembl" id="ENST00000288025.4">
    <property type="protein sequence ID" value="ENSP00000288025.3"/>
    <property type="gene ID" value="ENSG00000157315.5"/>
</dbReference>
<dbReference type="GeneID" id="146456"/>
<dbReference type="KEGG" id="hsa:146456"/>
<dbReference type="MANE-Select" id="ENST00000288025.4">
    <property type="protein sequence ID" value="ENSP00000288025.3"/>
    <property type="RefSeq nucleotide sequence ID" value="NM_144676.4"/>
    <property type="RefSeq protein sequence ID" value="NP_653277.2"/>
</dbReference>
<dbReference type="UCSC" id="uc002exc.3">
    <property type="organism name" value="human"/>
</dbReference>
<dbReference type="AGR" id="HGNC:28331"/>
<dbReference type="CTD" id="146456"/>
<dbReference type="DisGeNET" id="146456"/>
<dbReference type="GeneCards" id="TMED6"/>
<dbReference type="HGNC" id="HGNC:28331">
    <property type="gene designation" value="TMED6"/>
</dbReference>
<dbReference type="HPA" id="ENSG00000157315">
    <property type="expression patterns" value="Tissue enriched (pancreas)"/>
</dbReference>
<dbReference type="neXtProt" id="NX_Q8WW62"/>
<dbReference type="OpenTargets" id="ENSG00000157315"/>
<dbReference type="PharmGKB" id="PA128394759"/>
<dbReference type="VEuPathDB" id="HostDB:ENSG00000157315"/>
<dbReference type="eggNOG" id="KOG3287">
    <property type="taxonomic scope" value="Eukaryota"/>
</dbReference>
<dbReference type="GeneTree" id="ENSGT00390000010961"/>
<dbReference type="HOGENOM" id="CLU_066963_5_1_1"/>
<dbReference type="InParanoid" id="Q8WW62"/>
<dbReference type="OMA" id="HNRFSTM"/>
<dbReference type="OrthoDB" id="10037706at2759"/>
<dbReference type="PAN-GO" id="Q8WW62">
    <property type="GO annotations" value="7 GO annotations based on evolutionary models"/>
</dbReference>
<dbReference type="PhylomeDB" id="Q8WW62"/>
<dbReference type="TreeFam" id="TF313000"/>
<dbReference type="PathwayCommons" id="Q8WW62"/>
<dbReference type="SignaLink" id="Q8WW62"/>
<dbReference type="BioGRID-ORCS" id="146456">
    <property type="hits" value="9 hits in 1143 CRISPR screens"/>
</dbReference>
<dbReference type="ChiTaRS" id="TMED6">
    <property type="organism name" value="human"/>
</dbReference>
<dbReference type="GenomeRNAi" id="146456"/>
<dbReference type="Pharos" id="Q8WW62">
    <property type="development level" value="Tdark"/>
</dbReference>
<dbReference type="PRO" id="PR:Q8WW62"/>
<dbReference type="Proteomes" id="UP000005640">
    <property type="component" value="Chromosome 16"/>
</dbReference>
<dbReference type="RNAct" id="Q8WW62">
    <property type="molecule type" value="protein"/>
</dbReference>
<dbReference type="Bgee" id="ENSG00000157315">
    <property type="expression patterns" value="Expressed in body of pancreas and 108 other cell types or tissues"/>
</dbReference>
<dbReference type="GO" id="GO:0030134">
    <property type="term" value="C:COPII-coated ER to Golgi transport vesicle"/>
    <property type="evidence" value="ECO:0000318"/>
    <property type="project" value="GO_Central"/>
</dbReference>
<dbReference type="GO" id="GO:0005783">
    <property type="term" value="C:endoplasmic reticulum"/>
    <property type="evidence" value="ECO:0000318"/>
    <property type="project" value="GO_Central"/>
</dbReference>
<dbReference type="GO" id="GO:0005789">
    <property type="term" value="C:endoplasmic reticulum membrane"/>
    <property type="evidence" value="ECO:0007669"/>
    <property type="project" value="UniProtKB-SubCell"/>
</dbReference>
<dbReference type="GO" id="GO:0005793">
    <property type="term" value="C:endoplasmic reticulum-Golgi intermediate compartment"/>
    <property type="evidence" value="ECO:0000318"/>
    <property type="project" value="GO_Central"/>
</dbReference>
<dbReference type="GO" id="GO:0005794">
    <property type="term" value="C:Golgi apparatus"/>
    <property type="evidence" value="ECO:0000318"/>
    <property type="project" value="GO_Central"/>
</dbReference>
<dbReference type="GO" id="GO:0006888">
    <property type="term" value="P:endoplasmic reticulum to Golgi vesicle-mediated transport"/>
    <property type="evidence" value="ECO:0000318"/>
    <property type="project" value="GO_Central"/>
</dbReference>
<dbReference type="GO" id="GO:0007030">
    <property type="term" value="P:Golgi organization"/>
    <property type="evidence" value="ECO:0000318"/>
    <property type="project" value="GO_Central"/>
</dbReference>
<dbReference type="GO" id="GO:0006886">
    <property type="term" value="P:intracellular protein transport"/>
    <property type="evidence" value="ECO:0000318"/>
    <property type="project" value="GO_Central"/>
</dbReference>
<dbReference type="InterPro" id="IPR015720">
    <property type="entry name" value="Emp24-like"/>
</dbReference>
<dbReference type="InterPro" id="IPR009038">
    <property type="entry name" value="GOLD_dom"/>
</dbReference>
<dbReference type="PANTHER" id="PTHR22811">
    <property type="entry name" value="TRANSMEMBRANE EMP24 DOMAIN-CONTAINING PROTEIN"/>
    <property type="match status" value="1"/>
</dbReference>
<dbReference type="Pfam" id="PF01105">
    <property type="entry name" value="EMP24_GP25L"/>
    <property type="match status" value="1"/>
</dbReference>
<dbReference type="SMART" id="SM01190">
    <property type="entry name" value="EMP24_GP25L"/>
    <property type="match status" value="1"/>
</dbReference>
<dbReference type="PROSITE" id="PS50866">
    <property type="entry name" value="GOLD"/>
    <property type="match status" value="1"/>
</dbReference>
<name>TMED6_HUMAN</name>
<gene>
    <name type="primary">TMED6</name>
    <name type="ORF">UNQ9146/PRO34237</name>
</gene>
<accession>Q8WW62</accession>
<accession>Q6UXN5</accession>
<keyword id="KW-0256">Endoplasmic reticulum</keyword>
<keyword id="KW-0325">Glycoprotein</keyword>
<keyword id="KW-0472">Membrane</keyword>
<keyword id="KW-1267">Proteomics identification</keyword>
<keyword id="KW-1185">Reference proteome</keyword>
<keyword id="KW-0732">Signal</keyword>
<keyword id="KW-0812">Transmembrane</keyword>
<keyword id="KW-1133">Transmembrane helix</keyword>